<feature type="chain" id="PRO_0000256539" description="Trigger factor">
    <location>
        <begin position="1"/>
        <end position="427"/>
    </location>
</feature>
<feature type="domain" description="PPIase FKBP-type" evidence="1">
    <location>
        <begin position="163"/>
        <end position="248"/>
    </location>
</feature>
<keyword id="KW-0131">Cell cycle</keyword>
<keyword id="KW-0132">Cell division</keyword>
<keyword id="KW-0143">Chaperone</keyword>
<keyword id="KW-0963">Cytoplasm</keyword>
<keyword id="KW-0413">Isomerase</keyword>
<keyword id="KW-1185">Reference proteome</keyword>
<keyword id="KW-0697">Rotamase</keyword>
<gene>
    <name evidence="1" type="primary">tig</name>
    <name type="ordered locus">CHY_0324</name>
</gene>
<proteinExistence type="inferred from homology"/>
<protein>
    <recommendedName>
        <fullName evidence="1">Trigger factor</fullName>
        <shortName evidence="1">TF</shortName>
        <ecNumber evidence="1">5.2.1.8</ecNumber>
    </recommendedName>
    <alternativeName>
        <fullName evidence="1">PPIase</fullName>
    </alternativeName>
</protein>
<evidence type="ECO:0000255" key="1">
    <source>
        <dbReference type="HAMAP-Rule" id="MF_00303"/>
    </source>
</evidence>
<accession>Q3AF97</accession>
<reference key="1">
    <citation type="journal article" date="2005" name="PLoS Genet.">
        <title>Life in hot carbon monoxide: the complete genome sequence of Carboxydothermus hydrogenoformans Z-2901.</title>
        <authorList>
            <person name="Wu M."/>
            <person name="Ren Q."/>
            <person name="Durkin A.S."/>
            <person name="Daugherty S.C."/>
            <person name="Brinkac L.M."/>
            <person name="Dodson R.J."/>
            <person name="Madupu R."/>
            <person name="Sullivan S.A."/>
            <person name="Kolonay J.F."/>
            <person name="Nelson W.C."/>
            <person name="Tallon L.J."/>
            <person name="Jones K.M."/>
            <person name="Ulrich L.E."/>
            <person name="Gonzalez J.M."/>
            <person name="Zhulin I.B."/>
            <person name="Robb F.T."/>
            <person name="Eisen J.A."/>
        </authorList>
    </citation>
    <scope>NUCLEOTIDE SEQUENCE [LARGE SCALE GENOMIC DNA]</scope>
    <source>
        <strain>ATCC BAA-161 / DSM 6008 / Z-2901</strain>
    </source>
</reference>
<organism>
    <name type="scientific">Carboxydothermus hydrogenoformans (strain ATCC BAA-161 / DSM 6008 / Z-2901)</name>
    <dbReference type="NCBI Taxonomy" id="246194"/>
    <lineage>
        <taxon>Bacteria</taxon>
        <taxon>Bacillati</taxon>
        <taxon>Bacillota</taxon>
        <taxon>Clostridia</taxon>
        <taxon>Thermoanaerobacterales</taxon>
        <taxon>Thermoanaerobacteraceae</taxon>
        <taxon>Carboxydothermus</taxon>
    </lineage>
</organism>
<sequence>MKVTKETLEKSRVELTIEVEAEEVSKAYEKAYKKIAQKVVIPGFRKGKAPRVLVERHVGKEYILEEALDELLPESYVKAVNEAGIEPVDKPEVSLVSYGVNEPLVYKAVVDVKPEVELGQYTGLEVTKMPVEVTDEEVEKELEYLQNRYAKLITVEDGEAKFGDIVVIDFAGKMNGEPLEGGSADNYRLELGSKVFIPGFEEQIVGMKPGETKEINVTFPEDYQKEDLAGKPAVFTVTLKEIKRKELAPLDDEFAKDVSEFSTLAELKEDLKKKIAQTKENISREKMEAEVVEKAVDNANVEIPASMVNHEVEHILHHFEEELKYRRLTLEQYLNYQKKTLDELKEELKPRAERNVKTELVLEAIAKKEGITATDEEIDKELGKIAELYQQPVEEIKKLFAQRMDDLAYSIVRRKTIDFLVENAKAV</sequence>
<name>TIG_CARHZ</name>
<comment type="function">
    <text evidence="1">Involved in protein export. Acts as a chaperone by maintaining the newly synthesized protein in an open conformation. Functions as a peptidyl-prolyl cis-trans isomerase.</text>
</comment>
<comment type="catalytic activity">
    <reaction evidence="1">
        <text>[protein]-peptidylproline (omega=180) = [protein]-peptidylproline (omega=0)</text>
        <dbReference type="Rhea" id="RHEA:16237"/>
        <dbReference type="Rhea" id="RHEA-COMP:10747"/>
        <dbReference type="Rhea" id="RHEA-COMP:10748"/>
        <dbReference type="ChEBI" id="CHEBI:83833"/>
        <dbReference type="ChEBI" id="CHEBI:83834"/>
        <dbReference type="EC" id="5.2.1.8"/>
    </reaction>
</comment>
<comment type="subcellular location">
    <subcellularLocation>
        <location>Cytoplasm</location>
    </subcellularLocation>
    <text evidence="1">About half TF is bound to the ribosome near the polypeptide exit tunnel while the other half is free in the cytoplasm.</text>
</comment>
<comment type="domain">
    <text evidence="1">Consists of 3 domains; the N-terminus binds the ribosome, the middle domain has PPIase activity, while the C-terminus has intrinsic chaperone activity on its own.</text>
</comment>
<comment type="similarity">
    <text evidence="1">Belongs to the FKBP-type PPIase family. Tig subfamily.</text>
</comment>
<dbReference type="EC" id="5.2.1.8" evidence="1"/>
<dbReference type="EMBL" id="CP000141">
    <property type="protein sequence ID" value="ABB15848.1"/>
    <property type="molecule type" value="Genomic_DNA"/>
</dbReference>
<dbReference type="RefSeq" id="WP_011343263.1">
    <property type="nucleotide sequence ID" value="NC_007503.1"/>
</dbReference>
<dbReference type="SMR" id="Q3AF97"/>
<dbReference type="FunCoup" id="Q3AF97">
    <property type="interactions" value="509"/>
</dbReference>
<dbReference type="STRING" id="246194.CHY_0324"/>
<dbReference type="KEGG" id="chy:CHY_0324"/>
<dbReference type="eggNOG" id="COG0544">
    <property type="taxonomic scope" value="Bacteria"/>
</dbReference>
<dbReference type="HOGENOM" id="CLU_033058_3_2_9"/>
<dbReference type="InParanoid" id="Q3AF97"/>
<dbReference type="OrthoDB" id="9767721at2"/>
<dbReference type="Proteomes" id="UP000002706">
    <property type="component" value="Chromosome"/>
</dbReference>
<dbReference type="GO" id="GO:0005737">
    <property type="term" value="C:cytoplasm"/>
    <property type="evidence" value="ECO:0007669"/>
    <property type="project" value="UniProtKB-SubCell"/>
</dbReference>
<dbReference type="GO" id="GO:0003755">
    <property type="term" value="F:peptidyl-prolyl cis-trans isomerase activity"/>
    <property type="evidence" value="ECO:0007669"/>
    <property type="project" value="UniProtKB-UniRule"/>
</dbReference>
<dbReference type="GO" id="GO:0044183">
    <property type="term" value="F:protein folding chaperone"/>
    <property type="evidence" value="ECO:0007669"/>
    <property type="project" value="TreeGrafter"/>
</dbReference>
<dbReference type="GO" id="GO:0043022">
    <property type="term" value="F:ribosome binding"/>
    <property type="evidence" value="ECO:0007669"/>
    <property type="project" value="TreeGrafter"/>
</dbReference>
<dbReference type="GO" id="GO:0051083">
    <property type="term" value="P:'de novo' cotranslational protein folding"/>
    <property type="evidence" value="ECO:0007669"/>
    <property type="project" value="TreeGrafter"/>
</dbReference>
<dbReference type="GO" id="GO:0051301">
    <property type="term" value="P:cell division"/>
    <property type="evidence" value="ECO:0007669"/>
    <property type="project" value="UniProtKB-KW"/>
</dbReference>
<dbReference type="GO" id="GO:0061077">
    <property type="term" value="P:chaperone-mediated protein folding"/>
    <property type="evidence" value="ECO:0007669"/>
    <property type="project" value="TreeGrafter"/>
</dbReference>
<dbReference type="GO" id="GO:0015031">
    <property type="term" value="P:protein transport"/>
    <property type="evidence" value="ECO:0007669"/>
    <property type="project" value="UniProtKB-UniRule"/>
</dbReference>
<dbReference type="GO" id="GO:0043335">
    <property type="term" value="P:protein unfolding"/>
    <property type="evidence" value="ECO:0007669"/>
    <property type="project" value="TreeGrafter"/>
</dbReference>
<dbReference type="FunFam" id="3.10.50.40:FF:000001">
    <property type="entry name" value="Trigger factor"/>
    <property type="match status" value="1"/>
</dbReference>
<dbReference type="Gene3D" id="3.10.50.40">
    <property type="match status" value="1"/>
</dbReference>
<dbReference type="Gene3D" id="3.30.70.1050">
    <property type="entry name" value="Trigger factor ribosome-binding domain"/>
    <property type="match status" value="1"/>
</dbReference>
<dbReference type="Gene3D" id="1.10.3120.10">
    <property type="entry name" value="Trigger factor, C-terminal domain"/>
    <property type="match status" value="1"/>
</dbReference>
<dbReference type="HAMAP" id="MF_00303">
    <property type="entry name" value="Trigger_factor_Tig"/>
    <property type="match status" value="1"/>
</dbReference>
<dbReference type="InterPro" id="IPR046357">
    <property type="entry name" value="PPIase_dom_sf"/>
</dbReference>
<dbReference type="InterPro" id="IPR001179">
    <property type="entry name" value="PPIase_FKBP_dom"/>
</dbReference>
<dbReference type="InterPro" id="IPR005215">
    <property type="entry name" value="Trig_fac"/>
</dbReference>
<dbReference type="InterPro" id="IPR008880">
    <property type="entry name" value="Trigger_fac_C"/>
</dbReference>
<dbReference type="InterPro" id="IPR037041">
    <property type="entry name" value="Trigger_fac_C_sf"/>
</dbReference>
<dbReference type="InterPro" id="IPR008881">
    <property type="entry name" value="Trigger_fac_ribosome-bd_bac"/>
</dbReference>
<dbReference type="InterPro" id="IPR036611">
    <property type="entry name" value="Trigger_fac_ribosome-bd_sf"/>
</dbReference>
<dbReference type="InterPro" id="IPR027304">
    <property type="entry name" value="Trigger_fact/SurA_dom_sf"/>
</dbReference>
<dbReference type="NCBIfam" id="TIGR00115">
    <property type="entry name" value="tig"/>
    <property type="match status" value="1"/>
</dbReference>
<dbReference type="PANTHER" id="PTHR30560">
    <property type="entry name" value="TRIGGER FACTOR CHAPERONE AND PEPTIDYL-PROLYL CIS/TRANS ISOMERASE"/>
    <property type="match status" value="1"/>
</dbReference>
<dbReference type="PANTHER" id="PTHR30560:SF3">
    <property type="entry name" value="TRIGGER FACTOR-LIKE PROTEIN TIG, CHLOROPLASTIC"/>
    <property type="match status" value="1"/>
</dbReference>
<dbReference type="Pfam" id="PF00254">
    <property type="entry name" value="FKBP_C"/>
    <property type="match status" value="1"/>
</dbReference>
<dbReference type="Pfam" id="PF05698">
    <property type="entry name" value="Trigger_C"/>
    <property type="match status" value="1"/>
</dbReference>
<dbReference type="Pfam" id="PF05697">
    <property type="entry name" value="Trigger_N"/>
    <property type="match status" value="1"/>
</dbReference>
<dbReference type="PIRSF" id="PIRSF003095">
    <property type="entry name" value="Trigger_factor"/>
    <property type="match status" value="1"/>
</dbReference>
<dbReference type="SUPFAM" id="SSF54534">
    <property type="entry name" value="FKBP-like"/>
    <property type="match status" value="1"/>
</dbReference>
<dbReference type="SUPFAM" id="SSF109998">
    <property type="entry name" value="Triger factor/SurA peptide-binding domain-like"/>
    <property type="match status" value="1"/>
</dbReference>
<dbReference type="SUPFAM" id="SSF102735">
    <property type="entry name" value="Trigger factor ribosome-binding domain"/>
    <property type="match status" value="1"/>
</dbReference>
<dbReference type="PROSITE" id="PS50059">
    <property type="entry name" value="FKBP_PPIASE"/>
    <property type="match status" value="1"/>
</dbReference>